<organism>
    <name type="scientific">Natranaerobius thermophilus (strain ATCC BAA-1301 / DSM 18059 / JW/NM-WN-LF)</name>
    <dbReference type="NCBI Taxonomy" id="457570"/>
    <lineage>
        <taxon>Bacteria</taxon>
        <taxon>Bacillati</taxon>
        <taxon>Bacillota</taxon>
        <taxon>Clostridia</taxon>
        <taxon>Natranaerobiales</taxon>
        <taxon>Natranaerobiaceae</taxon>
        <taxon>Natranaerobius</taxon>
    </lineage>
</organism>
<dbReference type="EMBL" id="CP001034">
    <property type="protein sequence ID" value="ACB83807.1"/>
    <property type="molecule type" value="Genomic_DNA"/>
</dbReference>
<dbReference type="RefSeq" id="WP_012446696.1">
    <property type="nucleotide sequence ID" value="NC_010718.1"/>
</dbReference>
<dbReference type="SMR" id="B2A4F3"/>
<dbReference type="FunCoup" id="B2A4F3">
    <property type="interactions" value="356"/>
</dbReference>
<dbReference type="STRING" id="457570.Nther_0208"/>
<dbReference type="KEGG" id="nth:Nther_0208"/>
<dbReference type="eggNOG" id="COG0096">
    <property type="taxonomic scope" value="Bacteria"/>
</dbReference>
<dbReference type="HOGENOM" id="CLU_098428_0_2_9"/>
<dbReference type="InParanoid" id="B2A4F3"/>
<dbReference type="OrthoDB" id="9802617at2"/>
<dbReference type="Proteomes" id="UP000001683">
    <property type="component" value="Chromosome"/>
</dbReference>
<dbReference type="GO" id="GO:1990904">
    <property type="term" value="C:ribonucleoprotein complex"/>
    <property type="evidence" value="ECO:0007669"/>
    <property type="project" value="UniProtKB-KW"/>
</dbReference>
<dbReference type="GO" id="GO:0005840">
    <property type="term" value="C:ribosome"/>
    <property type="evidence" value="ECO:0007669"/>
    <property type="project" value="UniProtKB-KW"/>
</dbReference>
<dbReference type="GO" id="GO:0019843">
    <property type="term" value="F:rRNA binding"/>
    <property type="evidence" value="ECO:0007669"/>
    <property type="project" value="UniProtKB-UniRule"/>
</dbReference>
<dbReference type="GO" id="GO:0003735">
    <property type="term" value="F:structural constituent of ribosome"/>
    <property type="evidence" value="ECO:0007669"/>
    <property type="project" value="InterPro"/>
</dbReference>
<dbReference type="GO" id="GO:0006412">
    <property type="term" value="P:translation"/>
    <property type="evidence" value="ECO:0007669"/>
    <property type="project" value="UniProtKB-UniRule"/>
</dbReference>
<dbReference type="FunFam" id="3.30.1370.30:FF:000002">
    <property type="entry name" value="30S ribosomal protein S8"/>
    <property type="match status" value="1"/>
</dbReference>
<dbReference type="FunFam" id="3.30.1490.10:FF:000001">
    <property type="entry name" value="30S ribosomal protein S8"/>
    <property type="match status" value="1"/>
</dbReference>
<dbReference type="Gene3D" id="3.30.1370.30">
    <property type="match status" value="1"/>
</dbReference>
<dbReference type="Gene3D" id="3.30.1490.10">
    <property type="match status" value="1"/>
</dbReference>
<dbReference type="HAMAP" id="MF_01302_B">
    <property type="entry name" value="Ribosomal_uS8_B"/>
    <property type="match status" value="1"/>
</dbReference>
<dbReference type="InterPro" id="IPR000630">
    <property type="entry name" value="Ribosomal_uS8"/>
</dbReference>
<dbReference type="InterPro" id="IPR047863">
    <property type="entry name" value="Ribosomal_uS8_CS"/>
</dbReference>
<dbReference type="InterPro" id="IPR035987">
    <property type="entry name" value="Ribosomal_uS8_sf"/>
</dbReference>
<dbReference type="NCBIfam" id="NF001109">
    <property type="entry name" value="PRK00136.1"/>
    <property type="match status" value="1"/>
</dbReference>
<dbReference type="PANTHER" id="PTHR11758">
    <property type="entry name" value="40S RIBOSOMAL PROTEIN S15A"/>
    <property type="match status" value="1"/>
</dbReference>
<dbReference type="Pfam" id="PF00410">
    <property type="entry name" value="Ribosomal_S8"/>
    <property type="match status" value="1"/>
</dbReference>
<dbReference type="SUPFAM" id="SSF56047">
    <property type="entry name" value="Ribosomal protein S8"/>
    <property type="match status" value="1"/>
</dbReference>
<dbReference type="PROSITE" id="PS00053">
    <property type="entry name" value="RIBOSOMAL_S8"/>
    <property type="match status" value="1"/>
</dbReference>
<reference key="1">
    <citation type="submission" date="2008-04" db="EMBL/GenBank/DDBJ databases">
        <title>Complete sequence of chromosome of Natranaerobius thermophilus JW/NM-WN-LF.</title>
        <authorList>
            <consortium name="US DOE Joint Genome Institute"/>
            <person name="Copeland A."/>
            <person name="Lucas S."/>
            <person name="Lapidus A."/>
            <person name="Glavina del Rio T."/>
            <person name="Dalin E."/>
            <person name="Tice H."/>
            <person name="Bruce D."/>
            <person name="Goodwin L."/>
            <person name="Pitluck S."/>
            <person name="Chertkov O."/>
            <person name="Brettin T."/>
            <person name="Detter J.C."/>
            <person name="Han C."/>
            <person name="Kuske C.R."/>
            <person name="Schmutz J."/>
            <person name="Larimer F."/>
            <person name="Land M."/>
            <person name="Hauser L."/>
            <person name="Kyrpides N."/>
            <person name="Lykidis A."/>
            <person name="Mesbah N.M."/>
            <person name="Wiegel J."/>
        </authorList>
    </citation>
    <scope>NUCLEOTIDE SEQUENCE [LARGE SCALE GENOMIC DNA]</scope>
    <source>
        <strain>ATCC BAA-1301 / DSM 18059 / JW/NM-WN-LF</strain>
    </source>
</reference>
<sequence>MTMTDPIADMLTRIRNAQSVYHKQVEIPASKLKRELVDILKREGYINDFEYIDDNKQGILRIELKYSDNDEQVISGLKRISKPGLRVYAKKDEIPRVLGGLGIAVVSTSSGLLTDREARDQGIGGEILCYIW</sequence>
<accession>B2A4F3</accession>
<name>RS8_NATTJ</name>
<keyword id="KW-1185">Reference proteome</keyword>
<keyword id="KW-0687">Ribonucleoprotein</keyword>
<keyword id="KW-0689">Ribosomal protein</keyword>
<keyword id="KW-0694">RNA-binding</keyword>
<keyword id="KW-0699">rRNA-binding</keyword>
<protein>
    <recommendedName>
        <fullName evidence="1">Small ribosomal subunit protein uS8</fullName>
    </recommendedName>
    <alternativeName>
        <fullName evidence="2">30S ribosomal protein S8</fullName>
    </alternativeName>
</protein>
<gene>
    <name evidence="1" type="primary">rpsH</name>
    <name type="ordered locus">Nther_0208</name>
</gene>
<proteinExistence type="inferred from homology"/>
<evidence type="ECO:0000255" key="1">
    <source>
        <dbReference type="HAMAP-Rule" id="MF_01302"/>
    </source>
</evidence>
<evidence type="ECO:0000305" key="2"/>
<comment type="function">
    <text evidence="1">One of the primary rRNA binding proteins, it binds directly to 16S rRNA central domain where it helps coordinate assembly of the platform of the 30S subunit.</text>
</comment>
<comment type="subunit">
    <text evidence="1">Part of the 30S ribosomal subunit. Contacts proteins S5 and S12.</text>
</comment>
<comment type="similarity">
    <text evidence="1">Belongs to the universal ribosomal protein uS8 family.</text>
</comment>
<feature type="chain" id="PRO_1000214259" description="Small ribosomal subunit protein uS8">
    <location>
        <begin position="1"/>
        <end position="132"/>
    </location>
</feature>